<dbReference type="EMBL" id="AAVQ01000002">
    <property type="protein sequence ID" value="EAZ63021.1"/>
    <property type="molecule type" value="Genomic_DNA"/>
</dbReference>
<dbReference type="RefSeq" id="XP_001387044.1">
    <property type="nucleotide sequence ID" value="XM_001387007.1"/>
</dbReference>
<dbReference type="SMR" id="A3GHA4"/>
<dbReference type="FunCoup" id="A3GHA4">
    <property type="interactions" value="397"/>
</dbReference>
<dbReference type="STRING" id="322104.A3GHA4"/>
<dbReference type="GeneID" id="4851653"/>
<dbReference type="KEGG" id="pic:PICST_75521"/>
<dbReference type="eggNOG" id="ENOG502RY6R">
    <property type="taxonomic scope" value="Eukaryota"/>
</dbReference>
<dbReference type="HOGENOM" id="CLU_096593_1_0_1"/>
<dbReference type="InParanoid" id="A3GHA4"/>
<dbReference type="OMA" id="RESMNTI"/>
<dbReference type="OrthoDB" id="1743802at2759"/>
<dbReference type="Proteomes" id="UP000002258">
    <property type="component" value="Chromosome 1"/>
</dbReference>
<dbReference type="GO" id="GO:0005730">
    <property type="term" value="C:nucleolus"/>
    <property type="evidence" value="ECO:0007669"/>
    <property type="project" value="UniProtKB-SubCell"/>
</dbReference>
<dbReference type="GO" id="GO:0030687">
    <property type="term" value="C:preribosome, large subunit precursor"/>
    <property type="evidence" value="ECO:0007669"/>
    <property type="project" value="TreeGrafter"/>
</dbReference>
<dbReference type="GO" id="GO:0003729">
    <property type="term" value="F:mRNA binding"/>
    <property type="evidence" value="ECO:0007669"/>
    <property type="project" value="InterPro"/>
</dbReference>
<dbReference type="GO" id="GO:0008298">
    <property type="term" value="P:intracellular mRNA localization"/>
    <property type="evidence" value="ECO:0007669"/>
    <property type="project" value="TreeGrafter"/>
</dbReference>
<dbReference type="GO" id="GO:0051028">
    <property type="term" value="P:mRNA transport"/>
    <property type="evidence" value="ECO:0007669"/>
    <property type="project" value="UniProtKB-KW"/>
</dbReference>
<dbReference type="GO" id="GO:0042273">
    <property type="term" value="P:ribosomal large subunit biogenesis"/>
    <property type="evidence" value="ECO:0007669"/>
    <property type="project" value="InterPro"/>
</dbReference>
<dbReference type="InterPro" id="IPR037650">
    <property type="entry name" value="Loc1"/>
</dbReference>
<dbReference type="PANTHER" id="PTHR28028">
    <property type="entry name" value="60S RIBOSOMAL SUBUNIT ASSEMBLY/EXPORT PROTEIN LOC1"/>
    <property type="match status" value="1"/>
</dbReference>
<dbReference type="PANTHER" id="PTHR28028:SF1">
    <property type="entry name" value="60S RIBOSOMAL SUBUNIT ASSEMBLY_EXPORT PROTEIN LOC1"/>
    <property type="match status" value="1"/>
</dbReference>
<protein>
    <recommendedName>
        <fullName>60S ribosomal subunit assembly/export protein LOC1</fullName>
    </recommendedName>
</protein>
<feature type="chain" id="PRO_0000308802" description="60S ribosomal subunit assembly/export protein LOC1">
    <location>
        <begin position="1"/>
        <end position="204"/>
    </location>
</feature>
<feature type="region of interest" description="Disordered" evidence="3">
    <location>
        <begin position="1"/>
        <end position="52"/>
    </location>
</feature>
<feature type="region of interest" description="Disordered" evidence="3">
    <location>
        <begin position="148"/>
        <end position="204"/>
    </location>
</feature>
<feature type="coiled-coil region" evidence="2">
    <location>
        <begin position="121"/>
        <end position="178"/>
    </location>
</feature>
<feature type="compositionally biased region" description="Basic residues" evidence="3">
    <location>
        <begin position="7"/>
        <end position="16"/>
    </location>
</feature>
<feature type="compositionally biased region" description="Basic and acidic residues" evidence="3">
    <location>
        <begin position="148"/>
        <end position="167"/>
    </location>
</feature>
<feature type="compositionally biased region" description="Basic residues" evidence="3">
    <location>
        <begin position="174"/>
        <end position="183"/>
    </location>
</feature>
<feature type="compositionally biased region" description="Basic and acidic residues" evidence="3">
    <location>
        <begin position="184"/>
        <end position="195"/>
    </location>
</feature>
<gene>
    <name type="primary">LOC1</name>
    <name type="ORF">PICST_75521</name>
</gene>
<accession>A3GHA4</accession>
<reference key="1">
    <citation type="journal article" date="2007" name="Nat. Biotechnol.">
        <title>Genome sequence of the lignocellulose-bioconverting and xylose-fermenting yeast Pichia stipitis.</title>
        <authorList>
            <person name="Jeffries T.W."/>
            <person name="Grigoriev I.V."/>
            <person name="Grimwood J."/>
            <person name="Laplaza J.M."/>
            <person name="Aerts A."/>
            <person name="Salamov A."/>
            <person name="Schmutz J."/>
            <person name="Lindquist E."/>
            <person name="Dehal P."/>
            <person name="Shapiro H."/>
            <person name="Jin Y.-S."/>
            <person name="Passoth V."/>
            <person name="Richardson P.M."/>
        </authorList>
    </citation>
    <scope>NUCLEOTIDE SEQUENCE [LARGE SCALE GENOMIC DNA]</scope>
    <source>
        <strain>ATCC 58785 / CBS 6054 / NBRC 10063 / NRRL Y-11545</strain>
    </source>
</reference>
<sequence length="204" mass="23498">MAPRQSKTAKRSKTQNKTRANESEVFSDASARNLMANQPKLTEKSKVKKLSKRVVKKQQAKIRLYGAKNGKEYREDQLDIPTLNKAIIPGVRAKKGKKGKKFVDDNDTLTLSRLVKSINDKYDVVNESKLEKSRRLEELRELKKKEIERKEQQKMDKLEGKKSELKNRASVARSNRRKNAKAAKKIEDEETDQPRKKTKSVSFA</sequence>
<name>LOC1_PICST</name>
<comment type="function">
    <text evidence="1">Required for efficient assembly and nuclear export of the 60S ribosomal subunit.</text>
</comment>
<comment type="subunit">
    <text evidence="1">Component of the 66S pre-ribosomal particle.</text>
</comment>
<comment type="subcellular location">
    <subcellularLocation>
        <location evidence="1">Nucleus</location>
        <location evidence="1">Nucleolus</location>
    </subcellularLocation>
</comment>
<comment type="similarity">
    <text evidence="4">Belongs to the LOC1 family.</text>
</comment>
<proteinExistence type="inferred from homology"/>
<evidence type="ECO:0000250" key="1"/>
<evidence type="ECO:0000255" key="2"/>
<evidence type="ECO:0000256" key="3">
    <source>
        <dbReference type="SAM" id="MobiDB-lite"/>
    </source>
</evidence>
<evidence type="ECO:0000305" key="4"/>
<keyword id="KW-0175">Coiled coil</keyword>
<keyword id="KW-0509">mRNA transport</keyword>
<keyword id="KW-0539">Nucleus</keyword>
<keyword id="KW-1185">Reference proteome</keyword>
<keyword id="KW-0690">Ribosome biogenesis</keyword>
<keyword id="KW-0813">Transport</keyword>
<organism>
    <name type="scientific">Scheffersomyces stipitis (strain ATCC 58785 / CBS 6054 / NBRC 10063 / NRRL Y-11545)</name>
    <name type="common">Yeast</name>
    <name type="synonym">Pichia stipitis</name>
    <dbReference type="NCBI Taxonomy" id="322104"/>
    <lineage>
        <taxon>Eukaryota</taxon>
        <taxon>Fungi</taxon>
        <taxon>Dikarya</taxon>
        <taxon>Ascomycota</taxon>
        <taxon>Saccharomycotina</taxon>
        <taxon>Pichiomycetes</taxon>
        <taxon>Debaryomycetaceae</taxon>
        <taxon>Scheffersomyces</taxon>
    </lineage>
</organism>